<protein>
    <recommendedName>
        <fullName evidence="1">Probable 4-amino-4-deoxy-L-arabinose-phosphoundecaprenol flippase subunit ArnF</fullName>
        <shortName evidence="1">L-Ara4N-phosphoundecaprenol flippase subunit ArnF</shortName>
    </recommendedName>
    <alternativeName>
        <fullName evidence="1">Undecaprenyl phosphate-aminoarabinose flippase subunit ArnF</fullName>
    </alternativeName>
</protein>
<comment type="function">
    <text evidence="1">Translocates 4-amino-4-deoxy-L-arabinose-phosphoundecaprenol (alpha-L-Ara4N-phosphoundecaprenol) from the cytoplasmic to the periplasmic side of the inner membrane.</text>
</comment>
<comment type="pathway">
    <text evidence="1">Bacterial outer membrane biogenesis; lipopolysaccharide biosynthesis.</text>
</comment>
<comment type="subunit">
    <text evidence="1">Heterodimer of ArnE and ArnF.</text>
</comment>
<comment type="subcellular location">
    <subcellularLocation>
        <location evidence="1">Cell inner membrane</location>
        <topology evidence="1">Multi-pass membrane protein</topology>
    </subcellularLocation>
</comment>
<comment type="similarity">
    <text evidence="1">Belongs to the ArnF family.</text>
</comment>
<proteinExistence type="inferred from homology"/>
<evidence type="ECO:0000255" key="1">
    <source>
        <dbReference type="HAMAP-Rule" id="MF_00538"/>
    </source>
</evidence>
<organism>
    <name type="scientific">Yersinia pestis (strain Pestoides F)</name>
    <dbReference type="NCBI Taxonomy" id="386656"/>
    <lineage>
        <taxon>Bacteria</taxon>
        <taxon>Pseudomonadati</taxon>
        <taxon>Pseudomonadota</taxon>
        <taxon>Gammaproteobacteria</taxon>
        <taxon>Enterobacterales</taxon>
        <taxon>Yersiniaceae</taxon>
        <taxon>Yersinia</taxon>
    </lineage>
</organism>
<feature type="chain" id="PRO_1000017391" description="Probable 4-amino-4-deoxy-L-arabinose-phosphoundecaprenol flippase subunit ArnF">
    <location>
        <begin position="1"/>
        <end position="128"/>
    </location>
</feature>
<feature type="topological domain" description="Cytoplasmic" evidence="1">
    <location>
        <begin position="1"/>
        <end position="10"/>
    </location>
</feature>
<feature type="transmembrane region" description="Helical" evidence="1">
    <location>
        <begin position="11"/>
        <end position="31"/>
    </location>
</feature>
<feature type="topological domain" description="Periplasmic" evidence="1">
    <location>
        <begin position="32"/>
        <end position="47"/>
    </location>
</feature>
<feature type="transmembrane region" description="Helical" evidence="1">
    <location>
        <begin position="48"/>
        <end position="68"/>
    </location>
</feature>
<feature type="topological domain" description="Cytoplasmic" evidence="1">
    <location>
        <begin position="69"/>
        <end position="77"/>
    </location>
</feature>
<feature type="transmembrane region" description="Helical" evidence="1">
    <location>
        <begin position="78"/>
        <end position="98"/>
    </location>
</feature>
<feature type="topological domain" description="Periplasmic" evidence="1">
    <location>
        <begin position="99"/>
        <end position="101"/>
    </location>
</feature>
<feature type="transmembrane region" description="Helical" evidence="1">
    <location>
        <begin position="102"/>
        <end position="122"/>
    </location>
</feature>
<feature type="topological domain" description="Cytoplasmic" evidence="1">
    <location>
        <begin position="123"/>
        <end position="128"/>
    </location>
</feature>
<accession>A4TIM8</accession>
<sequence>MKGYLWGGASVVLVTVAQLVLKWGMMNIPLLSLADINVQFLTMYFVQLASVMCGLMGYALSMLCWFFALRYLPLNRAYPLLSLSYALVYLGAVLLPWFNEPATLLKTLGAGFILLGIWLINIKPIKAS</sequence>
<reference key="1">
    <citation type="submission" date="2007-02" db="EMBL/GenBank/DDBJ databases">
        <title>Complete sequence of chromosome of Yersinia pestis Pestoides F.</title>
        <authorList>
            <consortium name="US DOE Joint Genome Institute"/>
            <person name="Copeland A."/>
            <person name="Lucas S."/>
            <person name="Lapidus A."/>
            <person name="Barry K."/>
            <person name="Detter J.C."/>
            <person name="Glavina del Rio T."/>
            <person name="Hammon N."/>
            <person name="Israni S."/>
            <person name="Dalin E."/>
            <person name="Tice H."/>
            <person name="Pitluck S."/>
            <person name="Di Bartolo G."/>
            <person name="Chain P."/>
            <person name="Malfatti S."/>
            <person name="Shin M."/>
            <person name="Vergez L."/>
            <person name="Schmutz J."/>
            <person name="Larimer F."/>
            <person name="Land M."/>
            <person name="Hauser L."/>
            <person name="Worsham P."/>
            <person name="Chu M."/>
            <person name="Bearden S."/>
            <person name="Garcia E."/>
            <person name="Richardson P."/>
        </authorList>
    </citation>
    <scope>NUCLEOTIDE SEQUENCE [LARGE SCALE GENOMIC DNA]</scope>
    <source>
        <strain>Pestoides F</strain>
    </source>
</reference>
<dbReference type="EMBL" id="CP000668">
    <property type="protein sequence ID" value="ABP39140.1"/>
    <property type="molecule type" value="Genomic_DNA"/>
</dbReference>
<dbReference type="RefSeq" id="WP_002211819.1">
    <property type="nucleotide sequence ID" value="NZ_CP009715.1"/>
</dbReference>
<dbReference type="GeneID" id="57976261"/>
<dbReference type="KEGG" id="ypp:YPDSF_0734"/>
<dbReference type="PATRIC" id="fig|386656.14.peg.3135"/>
<dbReference type="UniPathway" id="UPA00030"/>
<dbReference type="GO" id="GO:0005886">
    <property type="term" value="C:plasma membrane"/>
    <property type="evidence" value="ECO:0007669"/>
    <property type="project" value="UniProtKB-SubCell"/>
</dbReference>
<dbReference type="GO" id="GO:1901505">
    <property type="term" value="F:carbohydrate derivative transmembrane transporter activity"/>
    <property type="evidence" value="ECO:0007669"/>
    <property type="project" value="InterPro"/>
</dbReference>
<dbReference type="GO" id="GO:0009245">
    <property type="term" value="P:lipid A biosynthetic process"/>
    <property type="evidence" value="ECO:0007669"/>
    <property type="project" value="UniProtKB-UniRule"/>
</dbReference>
<dbReference type="GO" id="GO:0009103">
    <property type="term" value="P:lipopolysaccharide biosynthetic process"/>
    <property type="evidence" value="ECO:0007669"/>
    <property type="project" value="UniProtKB-UniRule"/>
</dbReference>
<dbReference type="Gene3D" id="1.10.3730.20">
    <property type="match status" value="1"/>
</dbReference>
<dbReference type="HAMAP" id="MF_00538">
    <property type="entry name" value="Flippase_ArnF"/>
    <property type="match status" value="1"/>
</dbReference>
<dbReference type="InterPro" id="IPR022832">
    <property type="entry name" value="Flippase_ArnF"/>
</dbReference>
<dbReference type="InterPro" id="IPR000390">
    <property type="entry name" value="Small_drug/metabolite_transptr"/>
</dbReference>
<dbReference type="NCBIfam" id="NF002816">
    <property type="entry name" value="PRK02971.1-2"/>
    <property type="match status" value="1"/>
</dbReference>
<dbReference type="PANTHER" id="PTHR30561:SF9">
    <property type="entry name" value="4-AMINO-4-DEOXY-L-ARABINOSE-PHOSPHOUNDECAPRENOL FLIPPASE SUBUNIT ARNF-RELATED"/>
    <property type="match status" value="1"/>
</dbReference>
<dbReference type="PANTHER" id="PTHR30561">
    <property type="entry name" value="SMR FAMILY PROTON-DEPENDENT DRUG EFFLUX TRANSPORTER SUGE"/>
    <property type="match status" value="1"/>
</dbReference>
<dbReference type="SUPFAM" id="SSF103481">
    <property type="entry name" value="Multidrug resistance efflux transporter EmrE"/>
    <property type="match status" value="1"/>
</dbReference>
<name>ARNF_YERPP</name>
<gene>
    <name evidence="1" type="primary">arnF</name>
    <name type="ordered locus">YPDSF_0734</name>
</gene>
<keyword id="KW-0997">Cell inner membrane</keyword>
<keyword id="KW-1003">Cell membrane</keyword>
<keyword id="KW-0441">Lipid A biosynthesis</keyword>
<keyword id="KW-0444">Lipid biosynthesis</keyword>
<keyword id="KW-0443">Lipid metabolism</keyword>
<keyword id="KW-0448">Lipopolysaccharide biosynthesis</keyword>
<keyword id="KW-0472">Membrane</keyword>
<keyword id="KW-0812">Transmembrane</keyword>
<keyword id="KW-1133">Transmembrane helix</keyword>
<keyword id="KW-0813">Transport</keyword>